<sequence length="274" mass="29855">MNAHNAALGGTPQRLKRGIPLALRGVARRFGEREVLKDIDLLVPAGQFVAIVGRSGCGKSTLLRLLAGLDQPSRGELLAGSAALAEAREDTRLMFQDSRLLPWKRVIDNVGLGLRGDWRAKARQALRAVGLAERANEWPAALSGGQKQRVALARALIHEPRLLLLDEPLGALDALTRIEMQQLIEGLWREHGFTVLLVTHDVSEAVAVADRVILIEDGEIGLDLPVELPRPRSRGSARLAALEAEVLNRVLAQPELPPQPEPVSPLPTQLRWAL</sequence>
<organism>
    <name type="scientific">Pseudomonas aeruginosa (strain UCBPP-PA14)</name>
    <dbReference type="NCBI Taxonomy" id="208963"/>
    <lineage>
        <taxon>Bacteria</taxon>
        <taxon>Pseudomonadati</taxon>
        <taxon>Pseudomonadota</taxon>
        <taxon>Gammaproteobacteria</taxon>
        <taxon>Pseudomonadales</taxon>
        <taxon>Pseudomonadaceae</taxon>
        <taxon>Pseudomonas</taxon>
    </lineage>
</organism>
<comment type="function">
    <text evidence="1">Part of the ABC transporter complex SsuABC involved in aliphatic sulfonates import. Responsible for energy coupling to the transport system.</text>
</comment>
<comment type="catalytic activity">
    <reaction evidence="1">
        <text>ATP + H2O + aliphatic sulfonate-[sulfonate-binding protein]Side 1 = ADP + phosphate + aliphatic sulfonateSide 2 + [sulfonate-binding protein]Side 1.</text>
        <dbReference type="EC" id="7.6.2.14"/>
    </reaction>
</comment>
<comment type="subunit">
    <text evidence="1">The complex is composed of two ATP-binding proteins (SsuB), two transmembrane proteins (SsuC) and a solute-binding protein (SsuA).</text>
</comment>
<comment type="subcellular location">
    <subcellularLocation>
        <location evidence="1">Cell inner membrane</location>
        <topology evidence="1">Peripheral membrane protein</topology>
    </subcellularLocation>
</comment>
<comment type="similarity">
    <text evidence="1">Belongs to the ABC transporter superfamily. Aliphatic sulfonates importer (TC 3.A.1.17.2) family.</text>
</comment>
<evidence type="ECO:0000255" key="1">
    <source>
        <dbReference type="HAMAP-Rule" id="MF_01724"/>
    </source>
</evidence>
<proteinExistence type="inferred from homology"/>
<keyword id="KW-0067">ATP-binding</keyword>
<keyword id="KW-0997">Cell inner membrane</keyword>
<keyword id="KW-1003">Cell membrane</keyword>
<keyword id="KW-0472">Membrane</keyword>
<keyword id="KW-0547">Nucleotide-binding</keyword>
<keyword id="KW-1278">Translocase</keyword>
<keyword id="KW-0813">Transport</keyword>
<accession>Q02QT1</accession>
<reference key="1">
    <citation type="journal article" date="2006" name="Genome Biol.">
        <title>Genomic analysis reveals that Pseudomonas aeruginosa virulence is combinatorial.</title>
        <authorList>
            <person name="Lee D.G."/>
            <person name="Urbach J.M."/>
            <person name="Wu G."/>
            <person name="Liberati N.T."/>
            <person name="Feinbaum R.L."/>
            <person name="Miyata S."/>
            <person name="Diggins L.T."/>
            <person name="He J."/>
            <person name="Saucier M."/>
            <person name="Deziel E."/>
            <person name="Friedman L."/>
            <person name="Li L."/>
            <person name="Grills G."/>
            <person name="Montgomery K."/>
            <person name="Kucherlapati R."/>
            <person name="Rahme L.G."/>
            <person name="Ausubel F.M."/>
        </authorList>
    </citation>
    <scope>NUCLEOTIDE SEQUENCE [LARGE SCALE GENOMIC DNA]</scope>
    <source>
        <strain>UCBPP-PA14</strain>
    </source>
</reference>
<name>SSUB2_PSEAB</name>
<protein>
    <recommendedName>
        <fullName evidence="1">Aliphatic sulfonates import ATP-binding protein SsuB 2</fullName>
        <ecNumber evidence="1">7.6.2.14</ecNumber>
    </recommendedName>
</protein>
<gene>
    <name evidence="1" type="primary">ssuB2</name>
    <name type="ordered locus">PA14_19580</name>
</gene>
<feature type="chain" id="PRO_0000279930" description="Aliphatic sulfonates import ATP-binding protein SsuB 2">
    <location>
        <begin position="1"/>
        <end position="274"/>
    </location>
</feature>
<feature type="domain" description="ABC transporter" evidence="1">
    <location>
        <begin position="21"/>
        <end position="242"/>
    </location>
</feature>
<feature type="binding site" evidence="1">
    <location>
        <begin position="53"/>
        <end position="60"/>
    </location>
    <ligand>
        <name>ATP</name>
        <dbReference type="ChEBI" id="CHEBI:30616"/>
    </ligand>
</feature>
<dbReference type="EC" id="7.6.2.14" evidence="1"/>
<dbReference type="EMBL" id="CP000438">
    <property type="protein sequence ID" value="ABJ12698.1"/>
    <property type="molecule type" value="Genomic_DNA"/>
</dbReference>
<dbReference type="SMR" id="Q02QT1"/>
<dbReference type="KEGG" id="pau:PA14_19580"/>
<dbReference type="PseudoCAP" id="PA14_19580"/>
<dbReference type="HOGENOM" id="CLU_000604_1_22_6"/>
<dbReference type="BioCyc" id="PAER208963:G1G74-1612-MONOMER"/>
<dbReference type="Proteomes" id="UP000000653">
    <property type="component" value="Chromosome"/>
</dbReference>
<dbReference type="GO" id="GO:0005886">
    <property type="term" value="C:plasma membrane"/>
    <property type="evidence" value="ECO:0007669"/>
    <property type="project" value="UniProtKB-SubCell"/>
</dbReference>
<dbReference type="GO" id="GO:0005524">
    <property type="term" value="F:ATP binding"/>
    <property type="evidence" value="ECO:0007669"/>
    <property type="project" value="UniProtKB-KW"/>
</dbReference>
<dbReference type="GO" id="GO:0016887">
    <property type="term" value="F:ATP hydrolysis activity"/>
    <property type="evidence" value="ECO:0007669"/>
    <property type="project" value="InterPro"/>
</dbReference>
<dbReference type="CDD" id="cd03293">
    <property type="entry name" value="ABC_NrtD_SsuB_transporters"/>
    <property type="match status" value="1"/>
</dbReference>
<dbReference type="FunFam" id="3.40.50.300:FF:000653">
    <property type="entry name" value="Aliphatic sulfonates import ATP-binding protein SsuB"/>
    <property type="match status" value="1"/>
</dbReference>
<dbReference type="Gene3D" id="3.40.50.300">
    <property type="entry name" value="P-loop containing nucleotide triphosphate hydrolases"/>
    <property type="match status" value="1"/>
</dbReference>
<dbReference type="InterPro" id="IPR003593">
    <property type="entry name" value="AAA+_ATPase"/>
</dbReference>
<dbReference type="InterPro" id="IPR003439">
    <property type="entry name" value="ABC_transporter-like_ATP-bd"/>
</dbReference>
<dbReference type="InterPro" id="IPR017871">
    <property type="entry name" value="ABC_transporter-like_CS"/>
</dbReference>
<dbReference type="InterPro" id="IPR050166">
    <property type="entry name" value="ABC_transporter_ATP-bind"/>
</dbReference>
<dbReference type="InterPro" id="IPR027417">
    <property type="entry name" value="P-loop_NTPase"/>
</dbReference>
<dbReference type="NCBIfam" id="NF008420">
    <property type="entry name" value="PRK11247.1"/>
    <property type="match status" value="1"/>
</dbReference>
<dbReference type="PANTHER" id="PTHR42788:SF17">
    <property type="entry name" value="ALIPHATIC SULFONATES IMPORT ATP-BINDING PROTEIN SSUB"/>
    <property type="match status" value="1"/>
</dbReference>
<dbReference type="PANTHER" id="PTHR42788">
    <property type="entry name" value="TAURINE IMPORT ATP-BINDING PROTEIN-RELATED"/>
    <property type="match status" value="1"/>
</dbReference>
<dbReference type="Pfam" id="PF00005">
    <property type="entry name" value="ABC_tran"/>
    <property type="match status" value="1"/>
</dbReference>
<dbReference type="SMART" id="SM00382">
    <property type="entry name" value="AAA"/>
    <property type="match status" value="1"/>
</dbReference>
<dbReference type="SUPFAM" id="SSF52540">
    <property type="entry name" value="P-loop containing nucleoside triphosphate hydrolases"/>
    <property type="match status" value="1"/>
</dbReference>
<dbReference type="PROSITE" id="PS00211">
    <property type="entry name" value="ABC_TRANSPORTER_1"/>
    <property type="match status" value="1"/>
</dbReference>
<dbReference type="PROSITE" id="PS50893">
    <property type="entry name" value="ABC_TRANSPORTER_2"/>
    <property type="match status" value="1"/>
</dbReference>
<dbReference type="PROSITE" id="PS51291">
    <property type="entry name" value="SSUB"/>
    <property type="match status" value="1"/>
</dbReference>